<accession>Q7NXI1</accession>
<organism>
    <name type="scientific">Chromobacterium violaceum (strain ATCC 12472 / DSM 30191 / JCM 1249 / CCUG 213 / NBRC 12614 / NCIMB 9131 / NCTC 9757 / MK)</name>
    <dbReference type="NCBI Taxonomy" id="243365"/>
    <lineage>
        <taxon>Bacteria</taxon>
        <taxon>Pseudomonadati</taxon>
        <taxon>Pseudomonadota</taxon>
        <taxon>Betaproteobacteria</taxon>
        <taxon>Neisseriales</taxon>
        <taxon>Chromobacteriaceae</taxon>
        <taxon>Chromobacterium</taxon>
    </lineage>
</organism>
<comment type="function">
    <text evidence="1">Participates actively in the response to hyperosmotic and heat shock by preventing the aggregation of stress-denatured proteins and by disaggregating proteins, also in an autonomous, DnaK-independent fashion. Unfolded proteins bind initially to DnaJ; upon interaction with the DnaJ-bound protein, DnaK hydrolyzes its bound ATP, resulting in the formation of a stable complex. GrpE releases ADP from DnaK; ATP binding to DnaK triggers the release of the substrate protein, thus completing the reaction cycle. Several rounds of ATP-dependent interactions between DnaJ, DnaK and GrpE are required for fully efficient folding. Also involved, together with DnaK and GrpE, in the DNA replication of plasmids through activation of initiation proteins.</text>
</comment>
<comment type="cofactor">
    <cofactor evidence="1">
        <name>Zn(2+)</name>
        <dbReference type="ChEBI" id="CHEBI:29105"/>
    </cofactor>
    <text evidence="1">Binds 2 Zn(2+) ions per monomer.</text>
</comment>
<comment type="subunit">
    <text evidence="1">Homodimer.</text>
</comment>
<comment type="subcellular location">
    <subcellularLocation>
        <location evidence="1">Cytoplasm</location>
    </subcellularLocation>
</comment>
<comment type="domain">
    <text evidence="1">The J domain is necessary and sufficient to stimulate DnaK ATPase activity. Zinc center 1 plays an important role in the autonomous, DnaK-independent chaperone activity of DnaJ. Zinc center 2 is essential for interaction with DnaK and for DnaJ activity.</text>
</comment>
<comment type="similarity">
    <text evidence="1">Belongs to the DnaJ family.</text>
</comment>
<reference key="1">
    <citation type="journal article" date="2003" name="Proc. Natl. Acad. Sci. U.S.A.">
        <title>The complete genome sequence of Chromobacterium violaceum reveals remarkable and exploitable bacterial adaptability.</title>
        <authorList>
            <person name="Vasconcelos A.T.R."/>
            <person name="de Almeida D.F."/>
            <person name="Hungria M."/>
            <person name="Guimaraes C.T."/>
            <person name="Antonio R.V."/>
            <person name="Almeida F.C."/>
            <person name="de Almeida L.G.P."/>
            <person name="de Almeida R."/>
            <person name="Alves-Gomes J.A."/>
            <person name="Andrade E.M."/>
            <person name="Araripe J."/>
            <person name="de Araujo M.F.F."/>
            <person name="Astolfi-Filho S."/>
            <person name="Azevedo V."/>
            <person name="Baptista A.J."/>
            <person name="Bataus L.A.M."/>
            <person name="Batista J.S."/>
            <person name="Belo A."/>
            <person name="van den Berg C."/>
            <person name="Bogo M."/>
            <person name="Bonatto S."/>
            <person name="Bordignon J."/>
            <person name="Brigido M.M."/>
            <person name="Brito C.A."/>
            <person name="Brocchi M."/>
            <person name="Burity H.A."/>
            <person name="Camargo A.A."/>
            <person name="Cardoso D.D.P."/>
            <person name="Carneiro N.P."/>
            <person name="Carraro D.M."/>
            <person name="Carvalho C.M.B."/>
            <person name="Cascardo J.C.M."/>
            <person name="Cavada B.S."/>
            <person name="Chueire L.M.O."/>
            <person name="Creczynski-Pasa T.B."/>
            <person name="Cunha-Junior N.C."/>
            <person name="Fagundes N."/>
            <person name="Falcao C.L."/>
            <person name="Fantinatti F."/>
            <person name="Farias I.P."/>
            <person name="Felipe M.S.S."/>
            <person name="Ferrari L.P."/>
            <person name="Ferro J.A."/>
            <person name="Ferro M.I.T."/>
            <person name="Franco G.R."/>
            <person name="Freitas N.S.A."/>
            <person name="Furlan L.R."/>
            <person name="Gazzinelli R.T."/>
            <person name="Gomes E.A."/>
            <person name="Goncalves P.R."/>
            <person name="Grangeiro T.B."/>
            <person name="Grattapaglia D."/>
            <person name="Grisard E.C."/>
            <person name="Hanna E.S."/>
            <person name="Jardim S.N."/>
            <person name="Laurino J."/>
            <person name="Leoi L.C.T."/>
            <person name="Lima L.F.A."/>
            <person name="Loureiro M.F."/>
            <person name="Lyra M.C.C.P."/>
            <person name="Madeira H.M.F."/>
            <person name="Manfio G.P."/>
            <person name="Maranhao A.Q."/>
            <person name="Martins W.S."/>
            <person name="di Mauro S.M.Z."/>
            <person name="de Medeiros S.R.B."/>
            <person name="Meissner R.V."/>
            <person name="Moreira M.A.M."/>
            <person name="Nascimento F.F."/>
            <person name="Nicolas M.F."/>
            <person name="Oliveira J.G."/>
            <person name="Oliveira S.C."/>
            <person name="Paixao R.F.C."/>
            <person name="Parente J.A."/>
            <person name="Pedrosa F.O."/>
            <person name="Pena S.D.J."/>
            <person name="Pereira J.O."/>
            <person name="Pereira M."/>
            <person name="Pinto L.S.R.C."/>
            <person name="Pinto L.S."/>
            <person name="Porto J.I.R."/>
            <person name="Potrich D.P."/>
            <person name="Ramalho-Neto C.E."/>
            <person name="Reis A.M.M."/>
            <person name="Rigo L.U."/>
            <person name="Rondinelli E."/>
            <person name="Santos E.B.P."/>
            <person name="Santos F.R."/>
            <person name="Schneider M.P.C."/>
            <person name="Seuanez H.N."/>
            <person name="Silva A.M.R."/>
            <person name="da Silva A.L.C."/>
            <person name="Silva D.W."/>
            <person name="Silva R."/>
            <person name="Simoes I.C."/>
            <person name="Simon D."/>
            <person name="Soares C.M.A."/>
            <person name="Soares R.B.A."/>
            <person name="Souza E.M."/>
            <person name="Souza K.R.L."/>
            <person name="Souza R.C."/>
            <person name="Steffens M.B.R."/>
            <person name="Steindel M."/>
            <person name="Teixeira S.R."/>
            <person name="Urmenyi T."/>
            <person name="Vettore A."/>
            <person name="Wassem R."/>
            <person name="Zaha A."/>
            <person name="Simpson A.J.G."/>
        </authorList>
    </citation>
    <scope>NUCLEOTIDE SEQUENCE [LARGE SCALE GENOMIC DNA]</scope>
    <source>
        <strain>ATCC 12472 / DSM 30191 / JCM 1249 / CCUG 213 / NBRC 12614 / NCIMB 9131 / NCTC 9757 / MK</strain>
    </source>
</reference>
<sequence>MSKRDYYDVLGVNRDASDDDIKKAYRKLAMKYHPDRNPDSKEAEDKFKEVKEAYEILSDSQKRGAYDQFGHAGVDPQAGMGGGGQGFGGFGDFADIFSDIFGGGRGGSGGGRSNVYRGADLRYNMEITLEEAARGCEKQIRIPSHESCSTCNGTGAKPGTQPKTCATCGGHGQVRMSQGFFSIQQTCPTCHGTGKQITDPCGSCHGAGQKKTTKTLNVKIPAGVDEGDRIRLGGEGEPGQNGGPAGDLYVVTHIKQHAVFQRDGMDLHCEMPISFSTAALGGEVEIPTLDGMAKVKISPETQSGRVYRLRGKGVKAVRGAEYGDLHCHVVVETPVKLTERQKELLREFEAISQGDVATHNPRSKSFMDKLRDFFE</sequence>
<feature type="chain" id="PRO_0000070761" description="Chaperone protein DnaJ">
    <location>
        <begin position="1"/>
        <end position="375"/>
    </location>
</feature>
<feature type="domain" description="J" evidence="1">
    <location>
        <begin position="5"/>
        <end position="70"/>
    </location>
</feature>
<feature type="repeat" description="CXXCXGXG motif">
    <location>
        <begin position="148"/>
        <end position="155"/>
    </location>
</feature>
<feature type="repeat" description="CXXCXGXG motif">
    <location>
        <begin position="165"/>
        <end position="172"/>
    </location>
</feature>
<feature type="repeat" description="CXXCXGXG motif">
    <location>
        <begin position="187"/>
        <end position="194"/>
    </location>
</feature>
<feature type="repeat" description="CXXCXGXG motif">
    <location>
        <begin position="201"/>
        <end position="208"/>
    </location>
</feature>
<feature type="zinc finger region" description="CR-type" evidence="1">
    <location>
        <begin position="135"/>
        <end position="213"/>
    </location>
</feature>
<feature type="binding site" evidence="1">
    <location>
        <position position="148"/>
    </location>
    <ligand>
        <name>Zn(2+)</name>
        <dbReference type="ChEBI" id="CHEBI:29105"/>
        <label>1</label>
    </ligand>
</feature>
<feature type="binding site" evidence="1">
    <location>
        <position position="151"/>
    </location>
    <ligand>
        <name>Zn(2+)</name>
        <dbReference type="ChEBI" id="CHEBI:29105"/>
        <label>1</label>
    </ligand>
</feature>
<feature type="binding site" evidence="1">
    <location>
        <position position="165"/>
    </location>
    <ligand>
        <name>Zn(2+)</name>
        <dbReference type="ChEBI" id="CHEBI:29105"/>
        <label>2</label>
    </ligand>
</feature>
<feature type="binding site" evidence="1">
    <location>
        <position position="168"/>
    </location>
    <ligand>
        <name>Zn(2+)</name>
        <dbReference type="ChEBI" id="CHEBI:29105"/>
        <label>2</label>
    </ligand>
</feature>
<feature type="binding site" evidence="1">
    <location>
        <position position="187"/>
    </location>
    <ligand>
        <name>Zn(2+)</name>
        <dbReference type="ChEBI" id="CHEBI:29105"/>
        <label>2</label>
    </ligand>
</feature>
<feature type="binding site" evidence="1">
    <location>
        <position position="190"/>
    </location>
    <ligand>
        <name>Zn(2+)</name>
        <dbReference type="ChEBI" id="CHEBI:29105"/>
        <label>2</label>
    </ligand>
</feature>
<feature type="binding site" evidence="1">
    <location>
        <position position="201"/>
    </location>
    <ligand>
        <name>Zn(2+)</name>
        <dbReference type="ChEBI" id="CHEBI:29105"/>
        <label>1</label>
    </ligand>
</feature>
<feature type="binding site" evidence="1">
    <location>
        <position position="204"/>
    </location>
    <ligand>
        <name>Zn(2+)</name>
        <dbReference type="ChEBI" id="CHEBI:29105"/>
        <label>1</label>
    </ligand>
</feature>
<protein>
    <recommendedName>
        <fullName evidence="1">Chaperone protein DnaJ</fullName>
    </recommendedName>
</protein>
<evidence type="ECO:0000255" key="1">
    <source>
        <dbReference type="HAMAP-Rule" id="MF_01152"/>
    </source>
</evidence>
<keyword id="KW-0143">Chaperone</keyword>
<keyword id="KW-0963">Cytoplasm</keyword>
<keyword id="KW-0235">DNA replication</keyword>
<keyword id="KW-0479">Metal-binding</keyword>
<keyword id="KW-1185">Reference proteome</keyword>
<keyword id="KW-0677">Repeat</keyword>
<keyword id="KW-0346">Stress response</keyword>
<keyword id="KW-0862">Zinc</keyword>
<keyword id="KW-0863">Zinc-finger</keyword>
<dbReference type="EMBL" id="AE016825">
    <property type="protein sequence ID" value="AAQ59321.1"/>
    <property type="molecule type" value="Genomic_DNA"/>
</dbReference>
<dbReference type="RefSeq" id="WP_011135197.1">
    <property type="nucleotide sequence ID" value="NC_005085.1"/>
</dbReference>
<dbReference type="SMR" id="Q7NXI1"/>
<dbReference type="STRING" id="243365.CV_1645"/>
<dbReference type="GeneID" id="66367331"/>
<dbReference type="KEGG" id="cvi:CV_1645"/>
<dbReference type="eggNOG" id="COG0484">
    <property type="taxonomic scope" value="Bacteria"/>
</dbReference>
<dbReference type="HOGENOM" id="CLU_017633_0_7_4"/>
<dbReference type="OrthoDB" id="9779889at2"/>
<dbReference type="Proteomes" id="UP000001424">
    <property type="component" value="Chromosome"/>
</dbReference>
<dbReference type="GO" id="GO:0005737">
    <property type="term" value="C:cytoplasm"/>
    <property type="evidence" value="ECO:0007669"/>
    <property type="project" value="UniProtKB-SubCell"/>
</dbReference>
<dbReference type="GO" id="GO:0005524">
    <property type="term" value="F:ATP binding"/>
    <property type="evidence" value="ECO:0007669"/>
    <property type="project" value="InterPro"/>
</dbReference>
<dbReference type="GO" id="GO:0031072">
    <property type="term" value="F:heat shock protein binding"/>
    <property type="evidence" value="ECO:0007669"/>
    <property type="project" value="InterPro"/>
</dbReference>
<dbReference type="GO" id="GO:0051082">
    <property type="term" value="F:unfolded protein binding"/>
    <property type="evidence" value="ECO:0007669"/>
    <property type="project" value="UniProtKB-UniRule"/>
</dbReference>
<dbReference type="GO" id="GO:0008270">
    <property type="term" value="F:zinc ion binding"/>
    <property type="evidence" value="ECO:0007669"/>
    <property type="project" value="UniProtKB-UniRule"/>
</dbReference>
<dbReference type="GO" id="GO:0051085">
    <property type="term" value="P:chaperone cofactor-dependent protein refolding"/>
    <property type="evidence" value="ECO:0007669"/>
    <property type="project" value="TreeGrafter"/>
</dbReference>
<dbReference type="GO" id="GO:0006260">
    <property type="term" value="P:DNA replication"/>
    <property type="evidence" value="ECO:0007669"/>
    <property type="project" value="UniProtKB-KW"/>
</dbReference>
<dbReference type="GO" id="GO:0042026">
    <property type="term" value="P:protein refolding"/>
    <property type="evidence" value="ECO:0007669"/>
    <property type="project" value="TreeGrafter"/>
</dbReference>
<dbReference type="GO" id="GO:0009408">
    <property type="term" value="P:response to heat"/>
    <property type="evidence" value="ECO:0007669"/>
    <property type="project" value="InterPro"/>
</dbReference>
<dbReference type="CDD" id="cd06257">
    <property type="entry name" value="DnaJ"/>
    <property type="match status" value="1"/>
</dbReference>
<dbReference type="CDD" id="cd10747">
    <property type="entry name" value="DnaJ_C"/>
    <property type="match status" value="1"/>
</dbReference>
<dbReference type="CDD" id="cd10719">
    <property type="entry name" value="DnaJ_zf"/>
    <property type="match status" value="1"/>
</dbReference>
<dbReference type="FunFam" id="1.10.287.110:FF:000031">
    <property type="entry name" value="Molecular chaperone DnaJ"/>
    <property type="match status" value="1"/>
</dbReference>
<dbReference type="FunFam" id="2.10.230.10:FF:000002">
    <property type="entry name" value="Molecular chaperone DnaJ"/>
    <property type="match status" value="1"/>
</dbReference>
<dbReference type="FunFam" id="2.60.260.20:FF:000004">
    <property type="entry name" value="Molecular chaperone DnaJ"/>
    <property type="match status" value="1"/>
</dbReference>
<dbReference type="Gene3D" id="1.10.287.110">
    <property type="entry name" value="DnaJ domain"/>
    <property type="match status" value="1"/>
</dbReference>
<dbReference type="Gene3D" id="2.10.230.10">
    <property type="entry name" value="Heat shock protein DnaJ, cysteine-rich domain"/>
    <property type="match status" value="1"/>
</dbReference>
<dbReference type="Gene3D" id="2.60.260.20">
    <property type="entry name" value="Urease metallochaperone UreE, N-terminal domain"/>
    <property type="match status" value="2"/>
</dbReference>
<dbReference type="HAMAP" id="MF_01152">
    <property type="entry name" value="DnaJ"/>
    <property type="match status" value="1"/>
</dbReference>
<dbReference type="InterPro" id="IPR012724">
    <property type="entry name" value="DnaJ"/>
</dbReference>
<dbReference type="InterPro" id="IPR002939">
    <property type="entry name" value="DnaJ_C"/>
</dbReference>
<dbReference type="InterPro" id="IPR001623">
    <property type="entry name" value="DnaJ_domain"/>
</dbReference>
<dbReference type="InterPro" id="IPR018253">
    <property type="entry name" value="DnaJ_domain_CS"/>
</dbReference>
<dbReference type="InterPro" id="IPR008971">
    <property type="entry name" value="HSP40/DnaJ_pept-bd"/>
</dbReference>
<dbReference type="InterPro" id="IPR001305">
    <property type="entry name" value="HSP_DnaJ_Cys-rich_dom"/>
</dbReference>
<dbReference type="InterPro" id="IPR036410">
    <property type="entry name" value="HSP_DnaJ_Cys-rich_dom_sf"/>
</dbReference>
<dbReference type="InterPro" id="IPR036869">
    <property type="entry name" value="J_dom_sf"/>
</dbReference>
<dbReference type="NCBIfam" id="TIGR02349">
    <property type="entry name" value="DnaJ_bact"/>
    <property type="match status" value="1"/>
</dbReference>
<dbReference type="NCBIfam" id="NF008035">
    <property type="entry name" value="PRK10767.1"/>
    <property type="match status" value="1"/>
</dbReference>
<dbReference type="PANTHER" id="PTHR43096:SF48">
    <property type="entry name" value="CHAPERONE PROTEIN DNAJ"/>
    <property type="match status" value="1"/>
</dbReference>
<dbReference type="PANTHER" id="PTHR43096">
    <property type="entry name" value="DNAJ HOMOLOG 1, MITOCHONDRIAL-RELATED"/>
    <property type="match status" value="1"/>
</dbReference>
<dbReference type="Pfam" id="PF00226">
    <property type="entry name" value="DnaJ"/>
    <property type="match status" value="1"/>
</dbReference>
<dbReference type="Pfam" id="PF01556">
    <property type="entry name" value="DnaJ_C"/>
    <property type="match status" value="1"/>
</dbReference>
<dbReference type="Pfam" id="PF00684">
    <property type="entry name" value="DnaJ_CXXCXGXG"/>
    <property type="match status" value="1"/>
</dbReference>
<dbReference type="PRINTS" id="PR00625">
    <property type="entry name" value="JDOMAIN"/>
</dbReference>
<dbReference type="SMART" id="SM00271">
    <property type="entry name" value="DnaJ"/>
    <property type="match status" value="1"/>
</dbReference>
<dbReference type="SUPFAM" id="SSF46565">
    <property type="entry name" value="Chaperone J-domain"/>
    <property type="match status" value="1"/>
</dbReference>
<dbReference type="SUPFAM" id="SSF57938">
    <property type="entry name" value="DnaJ/Hsp40 cysteine-rich domain"/>
    <property type="match status" value="1"/>
</dbReference>
<dbReference type="SUPFAM" id="SSF49493">
    <property type="entry name" value="HSP40/DnaJ peptide-binding domain"/>
    <property type="match status" value="2"/>
</dbReference>
<dbReference type="PROSITE" id="PS00636">
    <property type="entry name" value="DNAJ_1"/>
    <property type="match status" value="1"/>
</dbReference>
<dbReference type="PROSITE" id="PS50076">
    <property type="entry name" value="DNAJ_2"/>
    <property type="match status" value="1"/>
</dbReference>
<dbReference type="PROSITE" id="PS51188">
    <property type="entry name" value="ZF_CR"/>
    <property type="match status" value="1"/>
</dbReference>
<name>DNAJ_CHRVO</name>
<gene>
    <name evidence="1" type="primary">dnaJ</name>
    <name type="ordered locus">CV_1645</name>
</gene>
<proteinExistence type="inferred from homology"/>